<keyword id="KW-0131">Cell cycle</keyword>
<keyword id="KW-0132">Cell division</keyword>
<keyword id="KW-0143">Chaperone</keyword>
<keyword id="KW-0963">Cytoplasm</keyword>
<keyword id="KW-0413">Isomerase</keyword>
<keyword id="KW-0697">Rotamase</keyword>
<name>TIG_MESH2</name>
<dbReference type="EC" id="5.2.1.8" evidence="1"/>
<dbReference type="EMBL" id="AE017332">
    <property type="protein sequence ID" value="AAV27774.1"/>
    <property type="molecule type" value="Genomic_DNA"/>
</dbReference>
<dbReference type="RefSeq" id="WP_011206070.1">
    <property type="nucleotide sequence ID" value="NC_006360.1"/>
</dbReference>
<dbReference type="SMR" id="Q601G9"/>
<dbReference type="KEGG" id="mhy:mhp233"/>
<dbReference type="eggNOG" id="COG0544">
    <property type="taxonomic scope" value="Bacteria"/>
</dbReference>
<dbReference type="HOGENOM" id="CLU_033058_3_2_14"/>
<dbReference type="PhylomeDB" id="Q601G9"/>
<dbReference type="Proteomes" id="UP000006822">
    <property type="component" value="Chromosome"/>
</dbReference>
<dbReference type="GO" id="GO:0005737">
    <property type="term" value="C:cytoplasm"/>
    <property type="evidence" value="ECO:0007669"/>
    <property type="project" value="UniProtKB-SubCell"/>
</dbReference>
<dbReference type="GO" id="GO:0003755">
    <property type="term" value="F:peptidyl-prolyl cis-trans isomerase activity"/>
    <property type="evidence" value="ECO:0007669"/>
    <property type="project" value="UniProtKB-UniRule"/>
</dbReference>
<dbReference type="GO" id="GO:0051301">
    <property type="term" value="P:cell division"/>
    <property type="evidence" value="ECO:0007669"/>
    <property type="project" value="UniProtKB-KW"/>
</dbReference>
<dbReference type="GO" id="GO:0006457">
    <property type="term" value="P:protein folding"/>
    <property type="evidence" value="ECO:0007669"/>
    <property type="project" value="UniProtKB-UniRule"/>
</dbReference>
<dbReference type="GO" id="GO:0015031">
    <property type="term" value="P:protein transport"/>
    <property type="evidence" value="ECO:0007669"/>
    <property type="project" value="UniProtKB-UniRule"/>
</dbReference>
<dbReference type="FunFam" id="3.10.50.40:FF:000001">
    <property type="entry name" value="Trigger factor"/>
    <property type="match status" value="1"/>
</dbReference>
<dbReference type="Gene3D" id="3.10.50.40">
    <property type="match status" value="1"/>
</dbReference>
<dbReference type="Gene3D" id="3.30.70.1050">
    <property type="entry name" value="Trigger factor ribosome-binding domain"/>
    <property type="match status" value="1"/>
</dbReference>
<dbReference type="Gene3D" id="1.10.3120.10">
    <property type="entry name" value="Trigger factor, C-terminal domain"/>
    <property type="match status" value="1"/>
</dbReference>
<dbReference type="HAMAP" id="MF_00303">
    <property type="entry name" value="Trigger_factor_Tig"/>
    <property type="match status" value="1"/>
</dbReference>
<dbReference type="InterPro" id="IPR046357">
    <property type="entry name" value="PPIase_dom_sf"/>
</dbReference>
<dbReference type="InterPro" id="IPR001179">
    <property type="entry name" value="PPIase_FKBP_dom"/>
</dbReference>
<dbReference type="InterPro" id="IPR005215">
    <property type="entry name" value="Trig_fac"/>
</dbReference>
<dbReference type="InterPro" id="IPR008880">
    <property type="entry name" value="Trigger_fac_C"/>
</dbReference>
<dbReference type="InterPro" id="IPR037041">
    <property type="entry name" value="Trigger_fac_C_sf"/>
</dbReference>
<dbReference type="InterPro" id="IPR008881">
    <property type="entry name" value="Trigger_fac_ribosome-bd_bac"/>
</dbReference>
<dbReference type="InterPro" id="IPR036611">
    <property type="entry name" value="Trigger_fac_ribosome-bd_sf"/>
</dbReference>
<dbReference type="InterPro" id="IPR027304">
    <property type="entry name" value="Trigger_fact/SurA_dom_sf"/>
</dbReference>
<dbReference type="NCBIfam" id="TIGR00115">
    <property type="entry name" value="tig"/>
    <property type="match status" value="1"/>
</dbReference>
<dbReference type="Pfam" id="PF00254">
    <property type="entry name" value="FKBP_C"/>
    <property type="match status" value="1"/>
</dbReference>
<dbReference type="Pfam" id="PF05698">
    <property type="entry name" value="Trigger_C"/>
    <property type="match status" value="1"/>
</dbReference>
<dbReference type="Pfam" id="PF05697">
    <property type="entry name" value="Trigger_N"/>
    <property type="match status" value="1"/>
</dbReference>
<dbReference type="PIRSF" id="PIRSF003095">
    <property type="entry name" value="Trigger_factor"/>
    <property type="match status" value="1"/>
</dbReference>
<dbReference type="SUPFAM" id="SSF54534">
    <property type="entry name" value="FKBP-like"/>
    <property type="match status" value="1"/>
</dbReference>
<dbReference type="SUPFAM" id="SSF109998">
    <property type="entry name" value="Triger factor/SurA peptide-binding domain-like"/>
    <property type="match status" value="1"/>
</dbReference>
<dbReference type="SUPFAM" id="SSF102735">
    <property type="entry name" value="Trigger factor ribosome-binding domain"/>
    <property type="match status" value="1"/>
</dbReference>
<dbReference type="PROSITE" id="PS50059">
    <property type="entry name" value="FKBP_PPIASE"/>
    <property type="match status" value="1"/>
</dbReference>
<reference key="1">
    <citation type="journal article" date="2004" name="J. Bacteriol.">
        <title>The genome sequence of Mycoplasma hyopneumoniae strain 232, the agent of swine mycoplasmosis.</title>
        <authorList>
            <person name="Minion F.C."/>
            <person name="Lefkowitz E.J."/>
            <person name="Madsen M.L."/>
            <person name="Cleary B.J."/>
            <person name="Swartzell S.M."/>
            <person name="Mahairas G.G."/>
        </authorList>
    </citation>
    <scope>NUCLEOTIDE SEQUENCE [LARGE SCALE GENOMIC DNA]</scope>
    <source>
        <strain>232</strain>
    </source>
</reference>
<organism>
    <name type="scientific">Mesomycoplasma hyopneumoniae (strain 232)</name>
    <name type="common">Mycoplasma hyopneumoniae</name>
    <dbReference type="NCBI Taxonomy" id="295358"/>
    <lineage>
        <taxon>Bacteria</taxon>
        <taxon>Bacillati</taxon>
        <taxon>Mycoplasmatota</taxon>
        <taxon>Mycoplasmoidales</taxon>
        <taxon>Metamycoplasmataceae</taxon>
        <taxon>Mesomycoplasma</taxon>
    </lineage>
</organism>
<protein>
    <recommendedName>
        <fullName evidence="1">Trigger factor</fullName>
        <shortName evidence="1">TF</shortName>
        <ecNumber evidence="1">5.2.1.8</ecNumber>
    </recommendedName>
    <alternativeName>
        <fullName evidence="1">PPIase</fullName>
    </alternativeName>
</protein>
<gene>
    <name evidence="1" type="primary">tig</name>
    <name type="ordered locus">mhp233</name>
</gene>
<accession>Q601G9</accession>
<evidence type="ECO:0000255" key="1">
    <source>
        <dbReference type="HAMAP-Rule" id="MF_00303"/>
    </source>
</evidence>
<evidence type="ECO:0000256" key="2">
    <source>
        <dbReference type="SAM" id="MobiDB-lite"/>
    </source>
</evidence>
<sequence length="465" mass="54208">MIKREFLPESAELKIKLTADSKKWAEFYQKAEQKQAAKVSLRGFRKGKVPLEKARAYLNPQAVFELALRMFLPELEKQAATNIIDSDNVIESPIFNIVNMDKNNLEIEFLYPVYPEIKLPDYKNLKTKFAIKKITKEDIELQKQKLLEAKGRFIEVNRPVKIGDVINFNFKGFIDDEPFDGGEGENFDLRIGSNSFIAGFEEQLVGLEIKKEADIYVTFPENYQVHTYANKKARFRVKINKIKENQPAKLTNEFVASLKIQNVETISQLEVYLENLTERENIERAKIDFQKNALTEIGEQVEVPLAKKLINLEIERLNEVFHSTLKQQEIPLKEYLKITKFTEKDIYDQFEVEAKKLLKNSFIFAEIAKLEGLVPTQQEYESHVEKLAKFTGKSVQEISETVSYNEIQINITNQKVIDKLIEFNHETKDEEIVNKNQNDNEIEQDKEQKDNNEEKIKQENNLENK</sequence>
<comment type="function">
    <text evidence="1">Involved in protein export. Acts as a chaperone by maintaining the newly synthesized protein in an open conformation. Functions as a peptidyl-prolyl cis-trans isomerase.</text>
</comment>
<comment type="catalytic activity">
    <reaction evidence="1">
        <text>[protein]-peptidylproline (omega=180) = [protein]-peptidylproline (omega=0)</text>
        <dbReference type="Rhea" id="RHEA:16237"/>
        <dbReference type="Rhea" id="RHEA-COMP:10747"/>
        <dbReference type="Rhea" id="RHEA-COMP:10748"/>
        <dbReference type="ChEBI" id="CHEBI:83833"/>
        <dbReference type="ChEBI" id="CHEBI:83834"/>
        <dbReference type="EC" id="5.2.1.8"/>
    </reaction>
</comment>
<comment type="subcellular location">
    <subcellularLocation>
        <location>Cytoplasm</location>
    </subcellularLocation>
    <text evidence="1">About half TF is bound to the ribosome near the polypeptide exit tunnel while the other half is free in the cytoplasm.</text>
</comment>
<comment type="domain">
    <text evidence="1">Consists of 3 domains; the N-terminus binds the ribosome, the middle domain has PPIase activity, while the C-terminus has intrinsic chaperone activity on its own.</text>
</comment>
<comment type="similarity">
    <text evidence="1">Belongs to the FKBP-type PPIase family. Tig subfamily.</text>
</comment>
<feature type="chain" id="PRO_0000179383" description="Trigger factor">
    <location>
        <begin position="1"/>
        <end position="465"/>
    </location>
</feature>
<feature type="domain" description="PPIase FKBP-type" evidence="1">
    <location>
        <begin position="163"/>
        <end position="248"/>
    </location>
</feature>
<feature type="region of interest" description="Disordered" evidence="2">
    <location>
        <begin position="431"/>
        <end position="465"/>
    </location>
</feature>
<feature type="compositionally biased region" description="Basic and acidic residues" evidence="2">
    <location>
        <begin position="443"/>
        <end position="465"/>
    </location>
</feature>
<proteinExistence type="inferred from homology"/>